<proteinExistence type="evidence at protein level"/>
<name>PANE_SALTY</name>
<protein>
    <recommendedName>
        <fullName>2-dehydropantoate 2-reductase</fullName>
        <ecNumber evidence="2">1.1.1.169</ecNumber>
    </recommendedName>
    <alternativeName>
        <fullName evidence="4">Ketopantoate reductase</fullName>
        <shortName>KPA reductase</shortName>
        <shortName>KPR</shortName>
    </alternativeName>
</protein>
<dbReference type="EC" id="1.1.1.169" evidence="2"/>
<dbReference type="EMBL" id="U09529">
    <property type="protein sequence ID" value="AAA56681.1"/>
    <property type="molecule type" value="Genomic_DNA"/>
</dbReference>
<dbReference type="EMBL" id="AE006468">
    <property type="protein sequence ID" value="AAL19388.1"/>
    <property type="molecule type" value="Genomic_DNA"/>
</dbReference>
<dbReference type="PIR" id="A55849">
    <property type="entry name" value="A55849"/>
</dbReference>
<dbReference type="RefSeq" id="NP_459429.1">
    <property type="nucleotide sequence ID" value="NC_003197.2"/>
</dbReference>
<dbReference type="RefSeq" id="WP_000705816.1">
    <property type="nucleotide sequence ID" value="NC_003197.2"/>
</dbReference>
<dbReference type="SMR" id="P37402"/>
<dbReference type="STRING" id="99287.STM0434"/>
<dbReference type="PaxDb" id="99287-STM0434"/>
<dbReference type="GeneID" id="1251953"/>
<dbReference type="KEGG" id="stm:STM0434"/>
<dbReference type="PATRIC" id="fig|99287.12.peg.463"/>
<dbReference type="HOGENOM" id="CLU_031468_0_1_6"/>
<dbReference type="OMA" id="ANYSSMY"/>
<dbReference type="PhylomeDB" id="P37402"/>
<dbReference type="BioCyc" id="SENT99287:STM0434-MONOMER"/>
<dbReference type="UniPathway" id="UPA00028">
    <property type="reaction ID" value="UER00004"/>
</dbReference>
<dbReference type="Proteomes" id="UP000001014">
    <property type="component" value="Chromosome"/>
</dbReference>
<dbReference type="GO" id="GO:0005737">
    <property type="term" value="C:cytoplasm"/>
    <property type="evidence" value="ECO:0000318"/>
    <property type="project" value="GO_Central"/>
</dbReference>
<dbReference type="GO" id="GO:0008677">
    <property type="term" value="F:2-dehydropantoate 2-reductase activity"/>
    <property type="evidence" value="ECO:0000318"/>
    <property type="project" value="GO_Central"/>
</dbReference>
<dbReference type="GO" id="GO:0050661">
    <property type="term" value="F:NADP binding"/>
    <property type="evidence" value="ECO:0000318"/>
    <property type="project" value="GO_Central"/>
</dbReference>
<dbReference type="GO" id="GO:0015940">
    <property type="term" value="P:pantothenate biosynthetic process"/>
    <property type="evidence" value="ECO:0007669"/>
    <property type="project" value="UniProtKB-UniPathway"/>
</dbReference>
<dbReference type="FunFam" id="1.10.1040.10:FF:000014">
    <property type="entry name" value="2-dehydropantoate 2-reductase"/>
    <property type="match status" value="1"/>
</dbReference>
<dbReference type="FunFam" id="3.40.50.720:FF:000162">
    <property type="entry name" value="2-dehydropantoate 2-reductase"/>
    <property type="match status" value="1"/>
</dbReference>
<dbReference type="Gene3D" id="1.10.1040.10">
    <property type="entry name" value="N-(1-d-carboxylethyl)-l-norvaline Dehydrogenase, domain 2"/>
    <property type="match status" value="1"/>
</dbReference>
<dbReference type="Gene3D" id="3.40.50.720">
    <property type="entry name" value="NAD(P)-binding Rossmann-like Domain"/>
    <property type="match status" value="1"/>
</dbReference>
<dbReference type="InterPro" id="IPR008927">
    <property type="entry name" value="6-PGluconate_DH-like_C_sf"/>
</dbReference>
<dbReference type="InterPro" id="IPR013328">
    <property type="entry name" value="6PGD_dom2"/>
</dbReference>
<dbReference type="InterPro" id="IPR003710">
    <property type="entry name" value="ApbA"/>
</dbReference>
<dbReference type="InterPro" id="IPR050838">
    <property type="entry name" value="Ketopantoate_reductase"/>
</dbReference>
<dbReference type="InterPro" id="IPR013752">
    <property type="entry name" value="KPA_reductase"/>
</dbReference>
<dbReference type="InterPro" id="IPR013332">
    <property type="entry name" value="KPR_N"/>
</dbReference>
<dbReference type="InterPro" id="IPR036291">
    <property type="entry name" value="NAD(P)-bd_dom_sf"/>
</dbReference>
<dbReference type="NCBIfam" id="TIGR00745">
    <property type="entry name" value="apbA_panE"/>
    <property type="match status" value="1"/>
</dbReference>
<dbReference type="NCBIfam" id="NF005087">
    <property type="entry name" value="PRK06522.1-1"/>
    <property type="match status" value="1"/>
</dbReference>
<dbReference type="PANTHER" id="PTHR43765:SF2">
    <property type="entry name" value="2-DEHYDROPANTOATE 2-REDUCTASE"/>
    <property type="match status" value="1"/>
</dbReference>
<dbReference type="PANTHER" id="PTHR43765">
    <property type="entry name" value="2-DEHYDROPANTOATE 2-REDUCTASE-RELATED"/>
    <property type="match status" value="1"/>
</dbReference>
<dbReference type="Pfam" id="PF02558">
    <property type="entry name" value="ApbA"/>
    <property type="match status" value="1"/>
</dbReference>
<dbReference type="Pfam" id="PF08546">
    <property type="entry name" value="ApbA_C"/>
    <property type="match status" value="1"/>
</dbReference>
<dbReference type="SUPFAM" id="SSF48179">
    <property type="entry name" value="6-phosphogluconate dehydrogenase C-terminal domain-like"/>
    <property type="match status" value="1"/>
</dbReference>
<dbReference type="SUPFAM" id="SSF51735">
    <property type="entry name" value="NAD(P)-binding Rossmann-fold domains"/>
    <property type="match status" value="1"/>
</dbReference>
<feature type="chain" id="PRO_0000157304" description="2-dehydropantoate 2-reductase">
    <location>
        <begin position="1"/>
        <end position="303"/>
    </location>
</feature>
<feature type="active site" description="Proton donor" evidence="1">
    <location>
        <position position="176"/>
    </location>
</feature>
<feature type="binding site" evidence="1">
    <location>
        <begin position="7"/>
        <end position="12"/>
    </location>
    <ligand>
        <name>NADP(+)</name>
        <dbReference type="ChEBI" id="CHEBI:58349"/>
    </ligand>
</feature>
<feature type="binding site" evidence="1">
    <location>
        <position position="98"/>
    </location>
    <ligand>
        <name>NADP(+)</name>
        <dbReference type="ChEBI" id="CHEBI:58349"/>
    </ligand>
</feature>
<feature type="binding site" evidence="1">
    <location>
        <position position="98"/>
    </location>
    <ligand>
        <name>substrate</name>
    </ligand>
</feature>
<feature type="binding site" evidence="1">
    <location>
        <position position="122"/>
    </location>
    <ligand>
        <name>NADP(+)</name>
        <dbReference type="ChEBI" id="CHEBI:58349"/>
    </ligand>
</feature>
<feature type="binding site" evidence="1">
    <location>
        <position position="180"/>
    </location>
    <ligand>
        <name>substrate</name>
    </ligand>
</feature>
<feature type="binding site" evidence="1">
    <location>
        <position position="184"/>
    </location>
    <ligand>
        <name>substrate</name>
    </ligand>
</feature>
<feature type="binding site" evidence="1">
    <location>
        <position position="194"/>
    </location>
    <ligand>
        <name>substrate</name>
    </ligand>
</feature>
<feature type="binding site" evidence="1">
    <location>
        <position position="244"/>
    </location>
    <ligand>
        <name>substrate</name>
    </ligand>
</feature>
<feature type="binding site" evidence="1">
    <location>
        <position position="256"/>
    </location>
    <ligand>
        <name>NADP(+)</name>
        <dbReference type="ChEBI" id="CHEBI:58349"/>
    </ligand>
</feature>
<feature type="sequence variant" description="In strain: DM4593.">
    <original>A</original>
    <variation>T</variation>
    <location>
        <position position="121"/>
    </location>
</feature>
<feature type="sequence conflict" description="In Ref. 1; AAA56681." evidence="6" ref="1">
    <original>WQVSDAVRTLAST</original>
    <variation>GFRRSTNPGVN</variation>
    <location>
        <begin position="74"/>
        <end position="86"/>
    </location>
</feature>
<feature type="sequence conflict" description="In Ref. 1; AAA56681." evidence="6" ref="1">
    <location>
        <position position="124"/>
    </location>
</feature>
<feature type="sequence conflict" description="In Ref. 1; AAA56681." evidence="6" ref="1">
    <original>LQ</original>
    <variation>FE</variation>
    <location>
        <begin position="246"/>
        <end position="247"/>
    </location>
</feature>
<feature type="sequence conflict" description="In Ref. 1; AAA56681." evidence="6" ref="1">
    <original>VPENSRLFEMVKRKESEYERSGTGMPRPW</original>
    <variation>FRKIAACLKW</variation>
    <location>
        <begin position="275"/>
        <end position="303"/>
    </location>
</feature>
<sequence length="303" mass="33938">MKITVLGCGALGQLWLSALCKHGHDVQGWLRVPQPYCSVNLIDTDGSFFNESLTANDPDFLAKSELLLVTLKAWQVSDAVRTLASTLPVTSPILLIHNGMGTIEELQNIQQPMLMGTITHAARRDGNIIIHVANGTTHIGPAREQDGDYSYLADILQGVLPDVAWHNNIRAEMWRKLAVNCVINPLTALWNCPNGELRHHTDEINAICEEVAAVIEREGYHTSADDLRYYVEQVIDSTAENISSMLQDVRAMRHTEIDYITGYLLKRARVHGLAVPENSRLFEMVKRKESEYERSGTGMPRPW</sequence>
<organism>
    <name type="scientific">Salmonella typhimurium (strain LT2 / SGSC1412 / ATCC 700720)</name>
    <dbReference type="NCBI Taxonomy" id="99287"/>
    <lineage>
        <taxon>Bacteria</taxon>
        <taxon>Pseudomonadati</taxon>
        <taxon>Pseudomonadota</taxon>
        <taxon>Gammaproteobacteria</taxon>
        <taxon>Enterobacterales</taxon>
        <taxon>Enterobacteriaceae</taxon>
        <taxon>Salmonella</taxon>
    </lineage>
</organism>
<keyword id="KW-0963">Cytoplasm</keyword>
<keyword id="KW-0903">Direct protein sequencing</keyword>
<keyword id="KW-0521">NADP</keyword>
<keyword id="KW-0560">Oxidoreductase</keyword>
<keyword id="KW-0566">Pantothenate biosynthesis</keyword>
<keyword id="KW-1185">Reference proteome</keyword>
<comment type="function">
    <text evidence="2">Catalyzes the NADPH-dependent reduction of ketopantoate into pantoic acid. Has a strong preference for NADPH over NADH as the electron acceptor. Pantoate, ketoisovalerate, oxaloacetate, pyruvate, 3-hydroxypyruvate, alpha-ketoglutarate, alpha-ketobutyrate, and acetaldehyde cannot serve as substrates for reduction.</text>
</comment>
<comment type="catalytic activity">
    <reaction evidence="2">
        <text>(R)-pantoate + NADP(+) = 2-dehydropantoate + NADPH + H(+)</text>
        <dbReference type="Rhea" id="RHEA:16233"/>
        <dbReference type="ChEBI" id="CHEBI:11561"/>
        <dbReference type="ChEBI" id="CHEBI:15378"/>
        <dbReference type="ChEBI" id="CHEBI:15980"/>
        <dbReference type="ChEBI" id="CHEBI:57783"/>
        <dbReference type="ChEBI" id="CHEBI:58349"/>
        <dbReference type="EC" id="1.1.1.169"/>
    </reaction>
</comment>
<comment type="biophysicochemical properties">
    <kinetics>
        <KM evidence="2">0.0776 mM for NADPH</KM>
        <KM evidence="2">0.0742 mM for 2-dehydropantoate</KM>
        <Vmax evidence="2">89.3 umol/min/mg enzyme</Vmax>
    </kinetics>
    <phDependence>
        <text evidence="2">Optimum pH is 6.25.</text>
    </phDependence>
    <temperatureDependence>
        <text evidence="2">Optimum temperature is 42 degrees Celsius.</text>
    </temperatureDependence>
</comment>
<comment type="pathway">
    <text>Cofactor biosynthesis; (R)-pantothenate biosynthesis; (R)-pantoate from 3-methyl-2-oxobutanoate: step 2/2.</text>
</comment>
<comment type="subunit">
    <text evidence="2">Monomer.</text>
</comment>
<comment type="subcellular location">
    <subcellularLocation>
        <location evidence="6">Cytoplasm</location>
    </subcellularLocation>
</comment>
<comment type="similarity">
    <text evidence="6">Belongs to the ketopantoate reductase family.</text>
</comment>
<reference key="1">
    <citation type="journal article" date="1994" name="J. Bacteriol.">
        <title>apbA, a new genetic locus involved in thiamine biosynthesis in Salmonella typhimurium.</title>
        <authorList>
            <person name="Downs D.M."/>
            <person name="Petersen L."/>
        </authorList>
    </citation>
    <scope>NUCLEOTIDE SEQUENCE [GENOMIC DNA]</scope>
    <source>
        <strain>LT2</strain>
    </source>
</reference>
<reference key="2">
    <citation type="journal article" date="2001" name="Nature">
        <title>Complete genome sequence of Salmonella enterica serovar Typhimurium LT2.</title>
        <authorList>
            <person name="McClelland M."/>
            <person name="Sanderson K.E."/>
            <person name="Spieth J."/>
            <person name="Clifton S.W."/>
            <person name="Latreille P."/>
            <person name="Courtney L."/>
            <person name="Porwollik S."/>
            <person name="Ali J."/>
            <person name="Dante M."/>
            <person name="Du F."/>
            <person name="Hou S."/>
            <person name="Layman D."/>
            <person name="Leonard S."/>
            <person name="Nguyen C."/>
            <person name="Scott K."/>
            <person name="Holmes A."/>
            <person name="Grewal N."/>
            <person name="Mulvaney E."/>
            <person name="Ryan E."/>
            <person name="Sun H."/>
            <person name="Florea L."/>
            <person name="Miller W."/>
            <person name="Stoneking T."/>
            <person name="Nhan M."/>
            <person name="Waterston R."/>
            <person name="Wilson R.K."/>
        </authorList>
    </citation>
    <scope>NUCLEOTIDE SEQUENCE [LARGE SCALE GENOMIC DNA]</scope>
    <source>
        <strain>LT2 / SGSC1412 / ATCC 700720</strain>
    </source>
</reference>
<reference key="3">
    <citation type="journal article" date="1998" name="J. Biol. Chem.">
        <title>ApbA, the ketopantoate reductase enzyme of Salmonella typhimurium is required for the synthesis of thiamine via the alternative pyrimidine biosynthetic pathway.</title>
        <authorList>
            <person name="Frodyma M.E."/>
            <person name="Downs D.M."/>
        </authorList>
    </citation>
    <scope>PROTEIN SEQUENCE OF 1-15</scope>
    <scope>FUNCTION</scope>
    <scope>CATALYTIC ACTIVITY</scope>
    <scope>SUBSTRATE SPECIFICITY</scope>
    <scope>BIOPHYSICOCHEMICAL PROPERTIES</scope>
    <scope>SUBUNIT</scope>
</reference>
<reference key="4">
    <citation type="journal article" date="1998" name="J. Bacteriol.">
        <title>The panE gene, encoding ketopantoate reductase, maps at 10 minutes and is allelic to apbA in Salmonella typhimurium.</title>
        <authorList>
            <person name="Frodyma M.E."/>
            <person name="Downs D.M."/>
        </authorList>
    </citation>
    <scope>SHOWS THAT APBA IS PANE</scope>
</reference>
<accession>P37402</accession>
<gene>
    <name evidence="5" type="primary">panE</name>
    <name evidence="3" type="synonym">apbA</name>
    <name type="ordered locus">STM0434</name>
</gene>
<evidence type="ECO:0000250" key="1">
    <source>
        <dbReference type="UniProtKB" id="P0A9J4"/>
    </source>
</evidence>
<evidence type="ECO:0000269" key="2">
    <source>
    </source>
</evidence>
<evidence type="ECO:0000303" key="3">
    <source>
    </source>
</evidence>
<evidence type="ECO:0000303" key="4">
    <source>
    </source>
</evidence>
<evidence type="ECO:0000303" key="5">
    <source>
    </source>
</evidence>
<evidence type="ECO:0000305" key="6"/>